<feature type="chain" id="PRO_0000109239" description="UDP-N-acetylglucosamine--N-acetylmuramyl-(pentapeptide) pyrophosphoryl-undecaprenol N-acetylglucosamine transferase">
    <location>
        <begin position="1"/>
        <end position="359"/>
    </location>
</feature>
<feature type="binding site" evidence="1">
    <location>
        <begin position="15"/>
        <end position="17"/>
    </location>
    <ligand>
        <name>UDP-N-acetyl-alpha-D-glucosamine</name>
        <dbReference type="ChEBI" id="CHEBI:57705"/>
    </ligand>
</feature>
<feature type="binding site" evidence="1">
    <location>
        <position position="127"/>
    </location>
    <ligand>
        <name>UDP-N-acetyl-alpha-D-glucosamine</name>
        <dbReference type="ChEBI" id="CHEBI:57705"/>
    </ligand>
</feature>
<feature type="binding site" evidence="1">
    <location>
        <position position="164"/>
    </location>
    <ligand>
        <name>UDP-N-acetyl-alpha-D-glucosamine</name>
        <dbReference type="ChEBI" id="CHEBI:57705"/>
    </ligand>
</feature>
<feature type="binding site" evidence="1">
    <location>
        <position position="192"/>
    </location>
    <ligand>
        <name>UDP-N-acetyl-alpha-D-glucosamine</name>
        <dbReference type="ChEBI" id="CHEBI:57705"/>
    </ligand>
</feature>
<feature type="binding site" evidence="1">
    <location>
        <position position="246"/>
    </location>
    <ligand>
        <name>UDP-N-acetyl-alpha-D-glucosamine</name>
        <dbReference type="ChEBI" id="CHEBI:57705"/>
    </ligand>
</feature>
<feature type="binding site" evidence="1">
    <location>
        <begin position="265"/>
        <end position="270"/>
    </location>
    <ligand>
        <name>UDP-N-acetyl-alpha-D-glucosamine</name>
        <dbReference type="ChEBI" id="CHEBI:57705"/>
    </ligand>
</feature>
<feature type="binding site" evidence="1">
    <location>
        <position position="290"/>
    </location>
    <ligand>
        <name>UDP-N-acetyl-alpha-D-glucosamine</name>
        <dbReference type="ChEBI" id="CHEBI:57705"/>
    </ligand>
</feature>
<proteinExistence type="inferred from homology"/>
<evidence type="ECO:0000255" key="1">
    <source>
        <dbReference type="HAMAP-Rule" id="MF_00033"/>
    </source>
</evidence>
<gene>
    <name evidence="1" type="primary">murG</name>
    <name type="ordered locus">WIGBR2060</name>
</gene>
<dbReference type="EC" id="2.4.1.227" evidence="1"/>
<dbReference type="EMBL" id="BA000021">
    <property type="protein sequence ID" value="BAC24352.1"/>
    <property type="molecule type" value="Genomic_DNA"/>
</dbReference>
<dbReference type="SMR" id="Q8D2Z6"/>
<dbReference type="STRING" id="36870.gene:10368694"/>
<dbReference type="CAZy" id="GT28">
    <property type="family name" value="Glycosyltransferase Family 28"/>
</dbReference>
<dbReference type="KEGG" id="wbr:murG"/>
<dbReference type="eggNOG" id="COG0707">
    <property type="taxonomic scope" value="Bacteria"/>
</dbReference>
<dbReference type="HOGENOM" id="CLU_037404_2_0_6"/>
<dbReference type="OrthoDB" id="9808936at2"/>
<dbReference type="UniPathway" id="UPA00219"/>
<dbReference type="Proteomes" id="UP000000562">
    <property type="component" value="Chromosome"/>
</dbReference>
<dbReference type="GO" id="GO:0005886">
    <property type="term" value="C:plasma membrane"/>
    <property type="evidence" value="ECO:0007669"/>
    <property type="project" value="UniProtKB-SubCell"/>
</dbReference>
<dbReference type="GO" id="GO:0051991">
    <property type="term" value="F:UDP-N-acetyl-D-glucosamine:N-acetylmuramoyl-L-alanyl-D-glutamyl-meso-2,6-diaminopimelyl-D-alanyl-D-alanine-diphosphoundecaprenol 4-beta-N-acetylglucosaminlytransferase activity"/>
    <property type="evidence" value="ECO:0007669"/>
    <property type="project" value="RHEA"/>
</dbReference>
<dbReference type="GO" id="GO:0050511">
    <property type="term" value="F:undecaprenyldiphospho-muramoylpentapeptide beta-N-acetylglucosaminyltransferase activity"/>
    <property type="evidence" value="ECO:0007669"/>
    <property type="project" value="UniProtKB-UniRule"/>
</dbReference>
<dbReference type="GO" id="GO:0005975">
    <property type="term" value="P:carbohydrate metabolic process"/>
    <property type="evidence" value="ECO:0007669"/>
    <property type="project" value="InterPro"/>
</dbReference>
<dbReference type="GO" id="GO:0051301">
    <property type="term" value="P:cell division"/>
    <property type="evidence" value="ECO:0007669"/>
    <property type="project" value="UniProtKB-KW"/>
</dbReference>
<dbReference type="GO" id="GO:0071555">
    <property type="term" value="P:cell wall organization"/>
    <property type="evidence" value="ECO:0007669"/>
    <property type="project" value="UniProtKB-KW"/>
</dbReference>
<dbReference type="GO" id="GO:0030259">
    <property type="term" value="P:lipid glycosylation"/>
    <property type="evidence" value="ECO:0007669"/>
    <property type="project" value="UniProtKB-UniRule"/>
</dbReference>
<dbReference type="GO" id="GO:0009252">
    <property type="term" value="P:peptidoglycan biosynthetic process"/>
    <property type="evidence" value="ECO:0007669"/>
    <property type="project" value="UniProtKB-UniRule"/>
</dbReference>
<dbReference type="GO" id="GO:0008360">
    <property type="term" value="P:regulation of cell shape"/>
    <property type="evidence" value="ECO:0007669"/>
    <property type="project" value="UniProtKB-KW"/>
</dbReference>
<dbReference type="CDD" id="cd03785">
    <property type="entry name" value="GT28_MurG"/>
    <property type="match status" value="1"/>
</dbReference>
<dbReference type="Gene3D" id="3.40.50.2000">
    <property type="entry name" value="Glycogen Phosphorylase B"/>
    <property type="match status" value="2"/>
</dbReference>
<dbReference type="HAMAP" id="MF_00033">
    <property type="entry name" value="MurG"/>
    <property type="match status" value="1"/>
</dbReference>
<dbReference type="InterPro" id="IPR006009">
    <property type="entry name" value="GlcNAc_MurG"/>
</dbReference>
<dbReference type="InterPro" id="IPR007235">
    <property type="entry name" value="Glyco_trans_28_C"/>
</dbReference>
<dbReference type="InterPro" id="IPR004276">
    <property type="entry name" value="GlycoTrans_28_N"/>
</dbReference>
<dbReference type="NCBIfam" id="TIGR01133">
    <property type="entry name" value="murG"/>
    <property type="match status" value="1"/>
</dbReference>
<dbReference type="PANTHER" id="PTHR21015:SF22">
    <property type="entry name" value="GLYCOSYLTRANSFERASE"/>
    <property type="match status" value="1"/>
</dbReference>
<dbReference type="PANTHER" id="PTHR21015">
    <property type="entry name" value="UDP-N-ACETYLGLUCOSAMINE--N-ACETYLMURAMYL-(PENTAPEPTIDE) PYROPHOSPHORYL-UNDECAPRENOL N-ACETYLGLUCOSAMINE TRANSFERASE 1"/>
    <property type="match status" value="1"/>
</dbReference>
<dbReference type="Pfam" id="PF04101">
    <property type="entry name" value="Glyco_tran_28_C"/>
    <property type="match status" value="1"/>
</dbReference>
<dbReference type="Pfam" id="PF03033">
    <property type="entry name" value="Glyco_transf_28"/>
    <property type="match status" value="1"/>
</dbReference>
<dbReference type="SUPFAM" id="SSF53756">
    <property type="entry name" value="UDP-Glycosyltransferase/glycogen phosphorylase"/>
    <property type="match status" value="1"/>
</dbReference>
<accession>Q8D2Z6</accession>
<keyword id="KW-0131">Cell cycle</keyword>
<keyword id="KW-0132">Cell division</keyword>
<keyword id="KW-1003">Cell membrane</keyword>
<keyword id="KW-0133">Cell shape</keyword>
<keyword id="KW-0961">Cell wall biogenesis/degradation</keyword>
<keyword id="KW-0328">Glycosyltransferase</keyword>
<keyword id="KW-0472">Membrane</keyword>
<keyword id="KW-0573">Peptidoglycan synthesis</keyword>
<keyword id="KW-1185">Reference proteome</keyword>
<keyword id="KW-0808">Transferase</keyword>
<organism>
    <name type="scientific">Wigglesworthia glossinidia brevipalpis</name>
    <dbReference type="NCBI Taxonomy" id="36870"/>
    <lineage>
        <taxon>Bacteria</taxon>
        <taxon>Pseudomonadati</taxon>
        <taxon>Pseudomonadota</taxon>
        <taxon>Gammaproteobacteria</taxon>
        <taxon>Enterobacterales</taxon>
        <taxon>Erwiniaceae</taxon>
        <taxon>Wigglesworthia</taxon>
    </lineage>
</organism>
<comment type="function">
    <text evidence="1">Cell wall formation. Catalyzes the transfer of a GlcNAc subunit on undecaprenyl-pyrophosphoryl-MurNAc-pentapeptide (lipid intermediate I) to form undecaprenyl-pyrophosphoryl-MurNAc-(pentapeptide)GlcNAc (lipid intermediate II).</text>
</comment>
<comment type="catalytic activity">
    <reaction evidence="1">
        <text>di-trans,octa-cis-undecaprenyl diphospho-N-acetyl-alpha-D-muramoyl-L-alanyl-D-glutamyl-meso-2,6-diaminopimeloyl-D-alanyl-D-alanine + UDP-N-acetyl-alpha-D-glucosamine = di-trans,octa-cis-undecaprenyl diphospho-[N-acetyl-alpha-D-glucosaminyl-(1-&gt;4)]-N-acetyl-alpha-D-muramoyl-L-alanyl-D-glutamyl-meso-2,6-diaminopimeloyl-D-alanyl-D-alanine + UDP + H(+)</text>
        <dbReference type="Rhea" id="RHEA:31227"/>
        <dbReference type="ChEBI" id="CHEBI:15378"/>
        <dbReference type="ChEBI" id="CHEBI:57705"/>
        <dbReference type="ChEBI" id="CHEBI:58223"/>
        <dbReference type="ChEBI" id="CHEBI:61387"/>
        <dbReference type="ChEBI" id="CHEBI:61388"/>
        <dbReference type="EC" id="2.4.1.227"/>
    </reaction>
</comment>
<comment type="pathway">
    <text evidence="1">Cell wall biogenesis; peptidoglycan biosynthesis.</text>
</comment>
<comment type="subcellular location">
    <subcellularLocation>
        <location evidence="1">Cell membrane</location>
        <topology evidence="1">Peripheral membrane protein</topology>
        <orientation evidence="1">Cytoplasmic side</orientation>
    </subcellularLocation>
</comment>
<comment type="similarity">
    <text evidence="1">Belongs to the glycosyltransferase 28 family. MurG subfamily.</text>
</comment>
<reference key="1">
    <citation type="journal article" date="2002" name="Nat. Genet.">
        <title>Genome sequence of the endocellular obligate symbiont of tsetse flies, Wigglesworthia glossinidia.</title>
        <authorList>
            <person name="Akman L."/>
            <person name="Yamashita A."/>
            <person name="Watanabe H."/>
            <person name="Oshima K."/>
            <person name="Shiba T."/>
            <person name="Hattori M."/>
            <person name="Aksoy S."/>
        </authorList>
    </citation>
    <scope>NUCLEOTIDE SEQUENCE [LARGE SCALE GENOMIC DNA]</scope>
</reference>
<name>MURG_WIGBR</name>
<protein>
    <recommendedName>
        <fullName evidence="1">UDP-N-acetylglucosamine--N-acetylmuramyl-(pentapeptide) pyrophosphoryl-undecaprenol N-acetylglucosamine transferase</fullName>
        <ecNumber evidence="1">2.4.1.227</ecNumber>
    </recommendedName>
    <alternativeName>
        <fullName evidence="1">Undecaprenyl-PP-MurNAc-pentapeptide-UDPGlcNAc GlcNAc transferase</fullName>
    </alternativeName>
</protein>
<sequence>MKNTKIKIIITGGGSGGHVFVGLSIAEQLIKIGCEILWIGSSDRIESYLIPKSNIKIYKINVIGFNGNNIFLKLISLIKTAYSILKIKKLIKYYKPDIVLSIGGYVSFPGAIATWISKVPLIIHEQNSVPGLSNYILYKLTNCKILQAFPNTFPRAKVVGNPIRNAILKIKTPEKRFLGRFGPLRILVIGGSQGASILNLVIPDVAKYLPNKFHIWHQSGYSEYELVKSKYEKLFHHTEYKVFDFIKDISIAYEWADLIICRSGALTVSEISSIGIAALFVPYNHKDNHQYWNAKILEKIGAAEIINQKDFTKKKLIKLLSSWDRKKSLIMSQKSKNLSITNSAKKIIKEINNLIGLVK</sequence>